<keyword id="KW-0489">Methyltransferase</keyword>
<keyword id="KW-0949">S-adenosyl-L-methionine</keyword>
<keyword id="KW-0808">Transferase</keyword>
<proteinExistence type="inferred from homology"/>
<sequence length="257" mass="28757">MSILSLVGLGISKKFITENAIDTLNNSDIIIFDKYTSRSCDINVDVLRRLVKGGKTLIEADRSLLENNSKIIMDYLDKNYNVSIASIGDVLIATTHVSLLIEAKQRGHNVKVIPGISVHCYLISKSLLSSYKFGKSVTVTFPYNDFIDPTPYNVIKDNKERGLHTILYLDLKSEKAMTANEALQILLRLEDKHRKNVLSKSDIVIVGARLGCDDEKIVALTVEEATLYDFGNTPHIIIIPGNLHYMEADAIKWMLMS</sequence>
<name>DPHB_SACI3</name>
<protein>
    <recommendedName>
        <fullName evidence="1">Diphthine synthase</fullName>
        <ecNumber evidence="1">2.1.1.98</ecNumber>
    </recommendedName>
    <alternativeName>
        <fullName evidence="1">Diphthamide biosynthesis methyltransferase</fullName>
    </alternativeName>
</protein>
<organism>
    <name type="scientific">Saccharolobus islandicus (strain M.16.27)</name>
    <name type="common">Sulfolobus islandicus</name>
    <dbReference type="NCBI Taxonomy" id="427318"/>
    <lineage>
        <taxon>Archaea</taxon>
        <taxon>Thermoproteota</taxon>
        <taxon>Thermoprotei</taxon>
        <taxon>Sulfolobales</taxon>
        <taxon>Sulfolobaceae</taxon>
        <taxon>Saccharolobus</taxon>
    </lineage>
</organism>
<reference key="1">
    <citation type="journal article" date="2009" name="Proc. Natl. Acad. Sci. U.S.A.">
        <title>Biogeography of the Sulfolobus islandicus pan-genome.</title>
        <authorList>
            <person name="Reno M.L."/>
            <person name="Held N.L."/>
            <person name="Fields C.J."/>
            <person name="Burke P.V."/>
            <person name="Whitaker R.J."/>
        </authorList>
    </citation>
    <scope>NUCLEOTIDE SEQUENCE [LARGE SCALE GENOMIC DNA]</scope>
    <source>
        <strain>M.16.27</strain>
    </source>
</reference>
<accession>C3N5D1</accession>
<comment type="function">
    <text evidence="1">S-adenosyl-L-methionine-dependent methyltransferase that catalyzes the trimethylation of the amino group of the modified target histidine residue in translation elongation factor 2 (EF-2), to form an intermediate called diphthine. The three successive methylation reactions represent the second step of diphthamide biosynthesis.</text>
</comment>
<comment type="catalytic activity">
    <reaction evidence="1">
        <text>2-[(3S)-amino-3-carboxypropyl]-L-histidyl-[translation elongation factor 2] + 3 S-adenosyl-L-methionine = diphthine-[translation elongation factor 2] + 3 S-adenosyl-L-homocysteine + 3 H(+)</text>
        <dbReference type="Rhea" id="RHEA:36415"/>
        <dbReference type="Rhea" id="RHEA-COMP:9749"/>
        <dbReference type="Rhea" id="RHEA-COMP:10172"/>
        <dbReference type="ChEBI" id="CHEBI:15378"/>
        <dbReference type="ChEBI" id="CHEBI:57856"/>
        <dbReference type="ChEBI" id="CHEBI:59789"/>
        <dbReference type="ChEBI" id="CHEBI:73995"/>
        <dbReference type="ChEBI" id="CHEBI:82696"/>
        <dbReference type="EC" id="2.1.1.98"/>
    </reaction>
</comment>
<comment type="pathway">
    <text evidence="1">Protein modification; peptidyl-diphthamide biosynthesis.</text>
</comment>
<comment type="subunit">
    <text evidence="1">Homodimer.</text>
</comment>
<comment type="similarity">
    <text evidence="1">Belongs to the diphthine synthase family.</text>
</comment>
<evidence type="ECO:0000255" key="1">
    <source>
        <dbReference type="HAMAP-Rule" id="MF_01084"/>
    </source>
</evidence>
<gene>
    <name evidence="1" type="primary">dphB</name>
    <name type="ordered locus">M1627_1323</name>
</gene>
<dbReference type="EC" id="2.1.1.98" evidence="1"/>
<dbReference type="EMBL" id="CP001401">
    <property type="protein sequence ID" value="ACP55206.1"/>
    <property type="molecule type" value="Genomic_DNA"/>
</dbReference>
<dbReference type="SMR" id="C3N5D1"/>
<dbReference type="KEGG" id="sim:M1627_1323"/>
<dbReference type="HOGENOM" id="CLU_066040_0_0_2"/>
<dbReference type="UniPathway" id="UPA00559"/>
<dbReference type="Proteomes" id="UP000002307">
    <property type="component" value="Chromosome"/>
</dbReference>
<dbReference type="GO" id="GO:0004164">
    <property type="term" value="F:diphthine synthase activity"/>
    <property type="evidence" value="ECO:0007669"/>
    <property type="project" value="UniProtKB-UniRule"/>
</dbReference>
<dbReference type="GO" id="GO:0032259">
    <property type="term" value="P:methylation"/>
    <property type="evidence" value="ECO:0007669"/>
    <property type="project" value="UniProtKB-KW"/>
</dbReference>
<dbReference type="GO" id="GO:0017183">
    <property type="term" value="P:protein histidyl modification to diphthamide"/>
    <property type="evidence" value="ECO:0007669"/>
    <property type="project" value="UniProtKB-UniRule"/>
</dbReference>
<dbReference type="CDD" id="cd11647">
    <property type="entry name" value="DHP5_DphB"/>
    <property type="match status" value="1"/>
</dbReference>
<dbReference type="Gene3D" id="3.40.1010.10">
    <property type="entry name" value="Cobalt-precorrin-4 Transmethylase, Domain 1"/>
    <property type="match status" value="1"/>
</dbReference>
<dbReference type="Gene3D" id="3.30.950.10">
    <property type="entry name" value="Methyltransferase, Cobalt-precorrin-4 Transmethylase, Domain 2"/>
    <property type="match status" value="1"/>
</dbReference>
<dbReference type="HAMAP" id="MF_01084">
    <property type="entry name" value="Diphthine_synth"/>
    <property type="match status" value="1"/>
</dbReference>
<dbReference type="InterPro" id="IPR000878">
    <property type="entry name" value="4pyrrol_Mease"/>
</dbReference>
<dbReference type="InterPro" id="IPR035996">
    <property type="entry name" value="4pyrrol_Methylase_sf"/>
</dbReference>
<dbReference type="InterPro" id="IPR014777">
    <property type="entry name" value="4pyrrole_Mease_sub1"/>
</dbReference>
<dbReference type="InterPro" id="IPR014776">
    <property type="entry name" value="4pyrrole_Mease_sub2"/>
</dbReference>
<dbReference type="InterPro" id="IPR004551">
    <property type="entry name" value="Dphthn_synthase"/>
</dbReference>
<dbReference type="NCBIfam" id="TIGR00522">
    <property type="entry name" value="dph5"/>
    <property type="match status" value="1"/>
</dbReference>
<dbReference type="PANTHER" id="PTHR10882:SF0">
    <property type="entry name" value="DIPHTHINE METHYL ESTER SYNTHASE"/>
    <property type="match status" value="1"/>
</dbReference>
<dbReference type="PANTHER" id="PTHR10882">
    <property type="entry name" value="DIPHTHINE SYNTHASE"/>
    <property type="match status" value="1"/>
</dbReference>
<dbReference type="Pfam" id="PF00590">
    <property type="entry name" value="TP_methylase"/>
    <property type="match status" value="1"/>
</dbReference>
<dbReference type="PIRSF" id="PIRSF036432">
    <property type="entry name" value="Diphthine_synth"/>
    <property type="match status" value="1"/>
</dbReference>
<dbReference type="SUPFAM" id="SSF53790">
    <property type="entry name" value="Tetrapyrrole methylase"/>
    <property type="match status" value="1"/>
</dbReference>
<feature type="chain" id="PRO_1000213520" description="Diphthine synthase">
    <location>
        <begin position="1"/>
        <end position="257"/>
    </location>
</feature>
<feature type="binding site" evidence="1">
    <location>
        <position position="11"/>
    </location>
    <ligand>
        <name>S-adenosyl-L-methionine</name>
        <dbReference type="ChEBI" id="CHEBI:59789"/>
    </ligand>
</feature>
<feature type="binding site" evidence="1">
    <location>
        <position position="89"/>
    </location>
    <ligand>
        <name>S-adenosyl-L-methionine</name>
        <dbReference type="ChEBI" id="CHEBI:59789"/>
    </ligand>
</feature>
<feature type="binding site" evidence="1">
    <location>
        <position position="92"/>
    </location>
    <ligand>
        <name>S-adenosyl-L-methionine</name>
        <dbReference type="ChEBI" id="CHEBI:59789"/>
    </ligand>
</feature>
<feature type="binding site" evidence="1">
    <location>
        <begin position="117"/>
        <end position="118"/>
    </location>
    <ligand>
        <name>S-adenosyl-L-methionine</name>
        <dbReference type="ChEBI" id="CHEBI:59789"/>
    </ligand>
</feature>
<feature type="binding site" evidence="1">
    <location>
        <position position="169"/>
    </location>
    <ligand>
        <name>S-adenosyl-L-methionine</name>
        <dbReference type="ChEBI" id="CHEBI:59789"/>
    </ligand>
</feature>
<feature type="binding site" evidence="1">
    <location>
        <position position="210"/>
    </location>
    <ligand>
        <name>S-adenosyl-L-methionine</name>
        <dbReference type="ChEBI" id="CHEBI:59789"/>
    </ligand>
</feature>
<feature type="binding site" evidence="1">
    <location>
        <position position="235"/>
    </location>
    <ligand>
        <name>S-adenosyl-L-methionine</name>
        <dbReference type="ChEBI" id="CHEBI:59789"/>
    </ligand>
</feature>